<feature type="signal peptide" evidence="2">
    <location>
        <begin position="1"/>
        <end position="21"/>
    </location>
</feature>
<feature type="chain" id="PRO_5007683683" description="22 kDa alpha-zein 8" evidence="2">
    <location>
        <begin position="22"/>
        <end position="266"/>
    </location>
</feature>
<accession>K7TUP3</accession>
<dbReference type="EMBL" id="CM000780">
    <property type="protein sequence ID" value="AFW60335.1"/>
    <property type="molecule type" value="Genomic_DNA"/>
</dbReference>
<dbReference type="STRING" id="4577.K7TUP3"/>
<dbReference type="PaxDb" id="4577-GRMZM2G044152_P01"/>
<dbReference type="EnsemblPlants" id="Zm00001eb166620_T001">
    <property type="protein sequence ID" value="Zm00001eb166620_P001"/>
    <property type="gene ID" value="Zm00001eb166620"/>
</dbReference>
<dbReference type="Gramene" id="Zm00001eb166620_T001">
    <property type="protein sequence ID" value="Zm00001eb166620_P001"/>
    <property type="gene ID" value="Zm00001eb166620"/>
</dbReference>
<dbReference type="eggNOG" id="ENOG502R48M">
    <property type="taxonomic scope" value="Eukaryota"/>
</dbReference>
<dbReference type="HOGENOM" id="CLU_073697_0_0_1"/>
<dbReference type="InParanoid" id="K7TUP3"/>
<dbReference type="OMA" id="LQQPWAL"/>
<dbReference type="Proteomes" id="UP000007305">
    <property type="component" value="Chromosome 4"/>
</dbReference>
<dbReference type="ExpressionAtlas" id="K7TUP3">
    <property type="expression patterns" value="baseline and differential"/>
</dbReference>
<dbReference type="GO" id="GO:0045735">
    <property type="term" value="F:nutrient reservoir activity"/>
    <property type="evidence" value="ECO:0007669"/>
    <property type="project" value="UniProtKB-KW"/>
</dbReference>
<dbReference type="InterPro" id="IPR051529">
    <property type="entry name" value="Seed_Storage_Prolamin"/>
</dbReference>
<dbReference type="InterPro" id="IPR002530">
    <property type="entry name" value="Zein"/>
</dbReference>
<dbReference type="PANTHER" id="PTHR48199">
    <property type="entry name" value="ALPHA KAFIRIN"/>
    <property type="match status" value="1"/>
</dbReference>
<dbReference type="PANTHER" id="PTHR48199:SF1">
    <property type="entry name" value="ALPHA KAFIRIN"/>
    <property type="match status" value="1"/>
</dbReference>
<dbReference type="Pfam" id="PF01559">
    <property type="entry name" value="Zein"/>
    <property type="match status" value="1"/>
</dbReference>
<sequence length="266" mass="29005">MATKILALLALLALFVSATNAFIIPQCSLAPSAIIPQFLRPVTSMGFEHLAVQAYKLQQALAASVLQQPINQLQQQSLAHLTIQTIATQQQQQFLPALSQLDVVNPVAYLQQQVLASNPLALANVAAYQQQQQLQQFLPALSQLAMVNPAAYLQQQQLLSSSPLVVGNAPTYLQQQLLQQIVPALTQLAVANPAAYLQQLLPFNQLTVSNSAAYLQQRQQLLNPLAVPNPLVTAFLQQQQLLPYSQFSLMNPALSWQQPIVGGAIF</sequence>
<keyword id="KW-1185">Reference proteome</keyword>
<keyword id="KW-0708">Seed storage protein</keyword>
<keyword id="KW-0732">Signal</keyword>
<keyword id="KW-0758">Storage protein</keyword>
<name>ZEAYB_MAIZE</name>
<evidence type="ECO:0000250" key="1">
    <source>
        <dbReference type="UniProtKB" id="P04698"/>
    </source>
</evidence>
<evidence type="ECO:0000255" key="2"/>
<evidence type="ECO:0000303" key="3">
    <source>
    </source>
</evidence>
<evidence type="ECO:0000305" key="4"/>
<evidence type="ECO:0000312" key="5">
    <source>
        <dbReference type="EMBL" id="AFW60335.1"/>
    </source>
</evidence>
<reference key="1">
    <citation type="journal article" date="2009" name="Science">
        <title>The B73 maize genome: complexity, diversity, and dynamics.</title>
        <authorList>
            <person name="Schnable P.S."/>
            <person name="Ware D."/>
            <person name="Fulton R.S."/>
            <person name="Stein J.C."/>
            <person name="Wei F."/>
            <person name="Pasternak S."/>
            <person name="Liang C."/>
            <person name="Zhang J."/>
            <person name="Fulton L."/>
            <person name="Graves T.A."/>
            <person name="Minx P."/>
            <person name="Reily A.D."/>
            <person name="Courtney L."/>
            <person name="Kruchowski S.S."/>
            <person name="Tomlinson C."/>
            <person name="Strong C."/>
            <person name="Delehaunty K."/>
            <person name="Fronick C."/>
            <person name="Courtney B."/>
            <person name="Rock S.M."/>
            <person name="Belter E."/>
            <person name="Du F."/>
            <person name="Kim K."/>
            <person name="Abbott R.M."/>
            <person name="Cotton M."/>
            <person name="Levy A."/>
            <person name="Marchetto P."/>
            <person name="Ochoa K."/>
            <person name="Jackson S.M."/>
            <person name="Gillam B."/>
            <person name="Chen W."/>
            <person name="Yan L."/>
            <person name="Higginbotham J."/>
            <person name="Cardenas M."/>
            <person name="Waligorski J."/>
            <person name="Applebaum E."/>
            <person name="Phelps L."/>
            <person name="Falcone J."/>
            <person name="Kanchi K."/>
            <person name="Thane T."/>
            <person name="Scimone A."/>
            <person name="Thane N."/>
            <person name="Henke J."/>
            <person name="Wang T."/>
            <person name="Ruppert J."/>
            <person name="Shah N."/>
            <person name="Rotter K."/>
            <person name="Hodges J."/>
            <person name="Ingenthron E."/>
            <person name="Cordes M."/>
            <person name="Kohlberg S."/>
            <person name="Sgro J."/>
            <person name="Delgado B."/>
            <person name="Mead K."/>
            <person name="Chinwalla A."/>
            <person name="Leonard S."/>
            <person name="Crouse K."/>
            <person name="Collura K."/>
            <person name="Kudrna D."/>
            <person name="Currie J."/>
            <person name="He R."/>
            <person name="Angelova A."/>
            <person name="Rajasekar S."/>
            <person name="Mueller T."/>
            <person name="Lomeli R."/>
            <person name="Scara G."/>
            <person name="Ko A."/>
            <person name="Delaney K."/>
            <person name="Wissotski M."/>
            <person name="Lopez G."/>
            <person name="Campos D."/>
            <person name="Braidotti M."/>
            <person name="Ashley E."/>
            <person name="Golser W."/>
            <person name="Kim H."/>
            <person name="Lee S."/>
            <person name="Lin J."/>
            <person name="Dujmic Z."/>
            <person name="Kim W."/>
            <person name="Talag J."/>
            <person name="Zuccolo A."/>
            <person name="Fan C."/>
            <person name="Sebastian A."/>
            <person name="Kramer M."/>
            <person name="Spiegel L."/>
            <person name="Nascimento L."/>
            <person name="Zutavern T."/>
            <person name="Miller B."/>
            <person name="Ambroise C."/>
            <person name="Muller S."/>
            <person name="Spooner W."/>
            <person name="Narechania A."/>
            <person name="Ren L."/>
            <person name="Wei S."/>
            <person name="Kumari S."/>
            <person name="Faga B."/>
            <person name="Levy M.J."/>
            <person name="McMahan L."/>
            <person name="Van Buren P."/>
            <person name="Vaughn M.W."/>
            <person name="Ying K."/>
            <person name="Yeh C.-T."/>
            <person name="Emrich S.J."/>
            <person name="Jia Y."/>
            <person name="Kalyanaraman A."/>
            <person name="Hsia A.-P."/>
            <person name="Barbazuk W.B."/>
            <person name="Baucom R.S."/>
            <person name="Brutnell T.P."/>
            <person name="Carpita N.C."/>
            <person name="Chaparro C."/>
            <person name="Chia J.-M."/>
            <person name="Deragon J.-M."/>
            <person name="Estill J.C."/>
            <person name="Fu Y."/>
            <person name="Jeddeloh J.A."/>
            <person name="Han Y."/>
            <person name="Lee H."/>
            <person name="Li P."/>
            <person name="Lisch D.R."/>
            <person name="Liu S."/>
            <person name="Liu Z."/>
            <person name="Nagel D.H."/>
            <person name="McCann M.C."/>
            <person name="SanMiguel P."/>
            <person name="Myers A.M."/>
            <person name="Nettleton D."/>
            <person name="Nguyen J."/>
            <person name="Penning B.W."/>
            <person name="Ponnala L."/>
            <person name="Schneider K.L."/>
            <person name="Schwartz D.C."/>
            <person name="Sharma A."/>
            <person name="Soderlund C."/>
            <person name="Springer N.M."/>
            <person name="Sun Q."/>
            <person name="Wang H."/>
            <person name="Waterman M."/>
            <person name="Westerman R."/>
            <person name="Wolfgruber T.K."/>
            <person name="Yang L."/>
            <person name="Yu Y."/>
            <person name="Zhang L."/>
            <person name="Zhou S."/>
            <person name="Zhu Q."/>
            <person name="Bennetzen J.L."/>
            <person name="Dawe R.K."/>
            <person name="Jiang J."/>
            <person name="Jiang N."/>
            <person name="Presting G.G."/>
            <person name="Wessler S.R."/>
            <person name="Aluru S."/>
            <person name="Martienssen R.A."/>
            <person name="Clifton S.W."/>
            <person name="McCombie W.R."/>
            <person name="Wing R.A."/>
            <person name="Wilson R.K."/>
        </authorList>
    </citation>
    <scope>NUCLEOTIDE SEQUENCE [LARGE SCALE GENOMIC DNA]</scope>
    <scope>IDENTIFICATION</scope>
    <source>
        <strain>cv. B73</strain>
    </source>
</reference>
<reference key="2">
    <citation type="journal article" date="2001" name="Genome Res.">
        <title>Sequence, regulation, and evolution of the maize 22-kD alpha zein gene family.</title>
        <authorList>
            <person name="Song R."/>
            <person name="Llaca V."/>
            <person name="Linton E."/>
            <person name="Messing J."/>
        </authorList>
    </citation>
    <scope>GENE FAMILY</scope>
    <scope>NOMENCLATURE</scope>
</reference>
<proteinExistence type="inferred from homology"/>
<organism>
    <name type="scientific">Zea mays</name>
    <name type="common">Maize</name>
    <dbReference type="NCBI Taxonomy" id="4577"/>
    <lineage>
        <taxon>Eukaryota</taxon>
        <taxon>Viridiplantae</taxon>
        <taxon>Streptophyta</taxon>
        <taxon>Embryophyta</taxon>
        <taxon>Tracheophyta</taxon>
        <taxon>Spermatophyta</taxon>
        <taxon>Magnoliopsida</taxon>
        <taxon>Liliopsida</taxon>
        <taxon>Poales</taxon>
        <taxon>Poaceae</taxon>
        <taxon>PACMAD clade</taxon>
        <taxon>Panicoideae</taxon>
        <taxon>Andropogonodae</taxon>
        <taxon>Andropogoneae</taxon>
        <taxon>Tripsacinae</taxon>
        <taxon>Zea</taxon>
    </lineage>
</organism>
<protein>
    <recommendedName>
        <fullName evidence="3">22 kDa alpha-zein 8</fullName>
    </recommendedName>
    <alternativeName>
        <fullName evidence="3">Zein-alpha 22C2</fullName>
    </alternativeName>
</protein>
<comment type="function">
    <text evidence="4">Zeins are major seed storage proteins.</text>
</comment>
<comment type="miscellaneous">
    <text>The alpha zeins of 19 kDa and 22 kDa account for 70% of the total zein fraction. They are encoded by a large multigene family.</text>
</comment>
<comment type="miscellaneous">
    <text evidence="1">Structurally, 22K and 19K zeins are composed of nine adjacent, topologically antiparallel helices clustered within a distorted cylinder.</text>
</comment>
<comment type="similarity">
    <text evidence="4">Belongs to the zein family.</text>
</comment>
<gene>
    <name evidence="3" type="primary">AZS22-8</name>
    <name evidence="4" type="ORF">GRMZM2G044152</name>
    <name evidence="5" type="ORF">ZEAMMB73_370768</name>
    <name type="ORF">Zm.97200</name>
</gene>